<dbReference type="EC" id="2.1.1.170" evidence="1"/>
<dbReference type="EMBL" id="CP000891">
    <property type="protein sequence ID" value="ABX51674.1"/>
    <property type="molecule type" value="Genomic_DNA"/>
</dbReference>
<dbReference type="RefSeq" id="WP_006083835.1">
    <property type="nucleotide sequence ID" value="NC_009997.1"/>
</dbReference>
<dbReference type="SMR" id="A9KX16"/>
<dbReference type="GeneID" id="11774470"/>
<dbReference type="KEGG" id="sbn:Sbal195_4517"/>
<dbReference type="HOGENOM" id="CLU_065341_2_0_6"/>
<dbReference type="Proteomes" id="UP000000770">
    <property type="component" value="Chromosome"/>
</dbReference>
<dbReference type="GO" id="GO:0005829">
    <property type="term" value="C:cytosol"/>
    <property type="evidence" value="ECO:0007669"/>
    <property type="project" value="TreeGrafter"/>
</dbReference>
<dbReference type="GO" id="GO:0070043">
    <property type="term" value="F:rRNA (guanine-N7-)-methyltransferase activity"/>
    <property type="evidence" value="ECO:0007669"/>
    <property type="project" value="UniProtKB-UniRule"/>
</dbReference>
<dbReference type="CDD" id="cd02440">
    <property type="entry name" value="AdoMet_MTases"/>
    <property type="match status" value="1"/>
</dbReference>
<dbReference type="FunFam" id="3.40.50.150:FF:000032">
    <property type="entry name" value="Ribosomal RNA small subunit methyltransferase G"/>
    <property type="match status" value="1"/>
</dbReference>
<dbReference type="Gene3D" id="3.40.50.150">
    <property type="entry name" value="Vaccinia Virus protein VP39"/>
    <property type="match status" value="1"/>
</dbReference>
<dbReference type="HAMAP" id="MF_00074">
    <property type="entry name" value="16SrRNA_methyltr_G"/>
    <property type="match status" value="1"/>
</dbReference>
<dbReference type="InterPro" id="IPR003682">
    <property type="entry name" value="rRNA_ssu_MeTfrase_G"/>
</dbReference>
<dbReference type="InterPro" id="IPR029063">
    <property type="entry name" value="SAM-dependent_MTases_sf"/>
</dbReference>
<dbReference type="NCBIfam" id="TIGR00138">
    <property type="entry name" value="rsmG_gidB"/>
    <property type="match status" value="1"/>
</dbReference>
<dbReference type="PANTHER" id="PTHR31760">
    <property type="entry name" value="S-ADENOSYL-L-METHIONINE-DEPENDENT METHYLTRANSFERASES SUPERFAMILY PROTEIN"/>
    <property type="match status" value="1"/>
</dbReference>
<dbReference type="PANTHER" id="PTHR31760:SF0">
    <property type="entry name" value="S-ADENOSYL-L-METHIONINE-DEPENDENT METHYLTRANSFERASES SUPERFAMILY PROTEIN"/>
    <property type="match status" value="1"/>
</dbReference>
<dbReference type="Pfam" id="PF02527">
    <property type="entry name" value="GidB"/>
    <property type="match status" value="1"/>
</dbReference>
<dbReference type="PIRSF" id="PIRSF003078">
    <property type="entry name" value="GidB"/>
    <property type="match status" value="1"/>
</dbReference>
<dbReference type="SUPFAM" id="SSF53335">
    <property type="entry name" value="S-adenosyl-L-methionine-dependent methyltransferases"/>
    <property type="match status" value="1"/>
</dbReference>
<comment type="function">
    <text evidence="1">Specifically methylates the N7 position of guanine in position 527 of 16S rRNA.</text>
</comment>
<comment type="catalytic activity">
    <reaction evidence="1">
        <text>guanosine(527) in 16S rRNA + S-adenosyl-L-methionine = N(7)-methylguanosine(527) in 16S rRNA + S-adenosyl-L-homocysteine</text>
        <dbReference type="Rhea" id="RHEA:42732"/>
        <dbReference type="Rhea" id="RHEA-COMP:10209"/>
        <dbReference type="Rhea" id="RHEA-COMP:10210"/>
        <dbReference type="ChEBI" id="CHEBI:57856"/>
        <dbReference type="ChEBI" id="CHEBI:59789"/>
        <dbReference type="ChEBI" id="CHEBI:74269"/>
        <dbReference type="ChEBI" id="CHEBI:74480"/>
        <dbReference type="EC" id="2.1.1.170"/>
    </reaction>
</comment>
<comment type="subcellular location">
    <subcellularLocation>
        <location evidence="1">Cytoplasm</location>
    </subcellularLocation>
</comment>
<comment type="similarity">
    <text evidence="1">Belongs to the methyltransferase superfamily. RNA methyltransferase RsmG family.</text>
</comment>
<accession>A9KX16</accession>
<protein>
    <recommendedName>
        <fullName evidence="1">Ribosomal RNA small subunit methyltransferase G</fullName>
        <ecNumber evidence="1">2.1.1.170</ecNumber>
    </recommendedName>
    <alternativeName>
        <fullName evidence="1">16S rRNA 7-methylguanosine methyltransferase</fullName>
        <shortName evidence="1">16S rRNA m7G methyltransferase</shortName>
    </alternativeName>
</protein>
<name>RSMG_SHEB9</name>
<keyword id="KW-0963">Cytoplasm</keyword>
<keyword id="KW-0489">Methyltransferase</keyword>
<keyword id="KW-0698">rRNA processing</keyword>
<keyword id="KW-0949">S-adenosyl-L-methionine</keyword>
<keyword id="KW-0808">Transferase</keyword>
<sequence length="206" mass="23383">MLSAQLEAYLAEINLPATAEQKKQLIDFVGMLNKWNKAYNLTSVRDPEAMLIRHIMDSLVVSKHLQGERFIDVGTGPGLPGIPLAIMNPDKQFVLLDSLGKRIRFQKQVSFELGIHNISSVESRVEAYQPEQKFDGVLSRAFASIQDMLTWCHHLPAEHGQFYALKGQLNDEEMQHIPSGFAVKEVIELKVPKLDEQRHLLKIIKE</sequence>
<proteinExistence type="inferred from homology"/>
<gene>
    <name evidence="1" type="primary">rsmG</name>
    <name type="ordered locus">Sbal195_4517</name>
</gene>
<feature type="chain" id="PRO_1000075231" description="Ribosomal RNA small subunit methyltransferase G">
    <location>
        <begin position="1"/>
        <end position="206"/>
    </location>
</feature>
<feature type="binding site" evidence="1">
    <location>
        <position position="74"/>
    </location>
    <ligand>
        <name>S-adenosyl-L-methionine</name>
        <dbReference type="ChEBI" id="CHEBI:59789"/>
    </ligand>
</feature>
<feature type="binding site" evidence="1">
    <location>
        <position position="79"/>
    </location>
    <ligand>
        <name>S-adenosyl-L-methionine</name>
        <dbReference type="ChEBI" id="CHEBI:59789"/>
    </ligand>
</feature>
<feature type="binding site" evidence="1">
    <location>
        <begin position="125"/>
        <end position="126"/>
    </location>
    <ligand>
        <name>S-adenosyl-L-methionine</name>
        <dbReference type="ChEBI" id="CHEBI:59789"/>
    </ligand>
</feature>
<feature type="binding site" evidence="1">
    <location>
        <position position="140"/>
    </location>
    <ligand>
        <name>S-adenosyl-L-methionine</name>
        <dbReference type="ChEBI" id="CHEBI:59789"/>
    </ligand>
</feature>
<reference key="1">
    <citation type="submission" date="2007-11" db="EMBL/GenBank/DDBJ databases">
        <title>Complete sequence of chromosome of Shewanella baltica OS195.</title>
        <authorList>
            <consortium name="US DOE Joint Genome Institute"/>
            <person name="Copeland A."/>
            <person name="Lucas S."/>
            <person name="Lapidus A."/>
            <person name="Barry K."/>
            <person name="Glavina del Rio T."/>
            <person name="Dalin E."/>
            <person name="Tice H."/>
            <person name="Pitluck S."/>
            <person name="Chain P."/>
            <person name="Malfatti S."/>
            <person name="Shin M."/>
            <person name="Vergez L."/>
            <person name="Schmutz J."/>
            <person name="Larimer F."/>
            <person name="Land M."/>
            <person name="Hauser L."/>
            <person name="Kyrpides N."/>
            <person name="Kim E."/>
            <person name="Brettar I."/>
            <person name="Rodrigues J."/>
            <person name="Konstantinidis K."/>
            <person name="Klappenbach J."/>
            <person name="Hofle M."/>
            <person name="Tiedje J."/>
            <person name="Richardson P."/>
        </authorList>
    </citation>
    <scope>NUCLEOTIDE SEQUENCE [LARGE SCALE GENOMIC DNA]</scope>
    <source>
        <strain>OS195</strain>
    </source>
</reference>
<evidence type="ECO:0000255" key="1">
    <source>
        <dbReference type="HAMAP-Rule" id="MF_00074"/>
    </source>
</evidence>
<organism>
    <name type="scientific">Shewanella baltica (strain OS195)</name>
    <dbReference type="NCBI Taxonomy" id="399599"/>
    <lineage>
        <taxon>Bacteria</taxon>
        <taxon>Pseudomonadati</taxon>
        <taxon>Pseudomonadota</taxon>
        <taxon>Gammaproteobacteria</taxon>
        <taxon>Alteromonadales</taxon>
        <taxon>Shewanellaceae</taxon>
        <taxon>Shewanella</taxon>
    </lineage>
</organism>